<sequence>MDTQSDYVVVGTGSAGAVVASRLSTDPATTVVALEAGPRDKNRFIGVPAAFSKLFRSEIDWDYLTEPQPELDGREIYWPRGKVLGGSSSMNAMMWVRGFASDYDEWAARAGPRWSYADVLGYFRRIENVTAAWHFVSGDDSGVTGPLHISRQRSPRSVTAAWLAAARECGFAAARPNSPRPEGFCETVVTQRRGARFSTADAYLKPAMRRKNLRVLTGATATRVVIDGDRAVGVEYQSDGQTRIVYARREVVLCAGAVNSPQLLMLSGIGDRDHLAEHDIDTVYHAPEVGCNLLDHLVTVLGFDVEKDSLFAAEKPGQLISYLLRRRGMLTSNVGEAYGFVRSRPELKLPDLELIFAPAPFYDEALVPPAGHGVVFGPILVAPQSRGQITLRSADPHAKPVIEPRYLSDLGGVDRAAMMAGLRICARIAQARPLRDLLGSIARPRNSTELDEATLELALATCSHTLYHPMGTCRMGSDEASVVDPQLRVRGVDGLRVADASVMPSTVRGHTHAPSVLIGEKAADLIRS</sequence>
<evidence type="ECO:0000250" key="1"/>
<evidence type="ECO:0000250" key="2">
    <source>
        <dbReference type="UniProtKB" id="E4QP00"/>
    </source>
</evidence>
<evidence type="ECO:0000255" key="3"/>
<evidence type="ECO:0000305" key="4"/>
<dbReference type="EC" id="1.1.-.-"/>
<dbReference type="EMBL" id="AE000516">
    <property type="protein sequence ID" value="AAK45577.1"/>
    <property type="molecule type" value="Genomic_DNA"/>
</dbReference>
<dbReference type="PIR" id="G70755">
    <property type="entry name" value="G70755"/>
</dbReference>
<dbReference type="RefSeq" id="WP_003406598.1">
    <property type="nucleotide sequence ID" value="NZ_KK341227.1"/>
</dbReference>
<dbReference type="SMR" id="P9WMV4"/>
<dbReference type="KEGG" id="mtc:MT1316"/>
<dbReference type="PATRIC" id="fig|83331.31.peg.1422"/>
<dbReference type="HOGENOM" id="CLU_002865_7_2_11"/>
<dbReference type="Proteomes" id="UP000001020">
    <property type="component" value="Chromosome"/>
</dbReference>
<dbReference type="GO" id="GO:0050660">
    <property type="term" value="F:flavin adenine dinucleotide binding"/>
    <property type="evidence" value="ECO:0007669"/>
    <property type="project" value="InterPro"/>
</dbReference>
<dbReference type="GO" id="GO:0016614">
    <property type="term" value="F:oxidoreductase activity, acting on CH-OH group of donors"/>
    <property type="evidence" value="ECO:0007669"/>
    <property type="project" value="InterPro"/>
</dbReference>
<dbReference type="Gene3D" id="3.50.50.60">
    <property type="entry name" value="FAD/NAD(P)-binding domain"/>
    <property type="match status" value="1"/>
</dbReference>
<dbReference type="Gene3D" id="3.30.560.10">
    <property type="entry name" value="Glucose Oxidase, domain 3"/>
    <property type="match status" value="1"/>
</dbReference>
<dbReference type="InterPro" id="IPR036188">
    <property type="entry name" value="FAD/NAD-bd_sf"/>
</dbReference>
<dbReference type="InterPro" id="IPR012132">
    <property type="entry name" value="GMC_OxRdtase"/>
</dbReference>
<dbReference type="InterPro" id="IPR000172">
    <property type="entry name" value="GMC_OxRdtase_N"/>
</dbReference>
<dbReference type="InterPro" id="IPR007867">
    <property type="entry name" value="GMC_OxRtase_C"/>
</dbReference>
<dbReference type="PANTHER" id="PTHR11552:SF147">
    <property type="entry name" value="CHOLINE DEHYDROGENASE, MITOCHONDRIAL"/>
    <property type="match status" value="1"/>
</dbReference>
<dbReference type="PANTHER" id="PTHR11552">
    <property type="entry name" value="GLUCOSE-METHANOL-CHOLINE GMC OXIDOREDUCTASE"/>
    <property type="match status" value="1"/>
</dbReference>
<dbReference type="Pfam" id="PF05199">
    <property type="entry name" value="GMC_oxred_C"/>
    <property type="match status" value="1"/>
</dbReference>
<dbReference type="Pfam" id="PF00732">
    <property type="entry name" value="GMC_oxred_N"/>
    <property type="match status" value="1"/>
</dbReference>
<dbReference type="PIRSF" id="PIRSF000137">
    <property type="entry name" value="Alcohol_oxidase"/>
    <property type="match status" value="1"/>
</dbReference>
<dbReference type="SUPFAM" id="SSF54373">
    <property type="entry name" value="FAD-linked reductases, C-terminal domain"/>
    <property type="match status" value="1"/>
</dbReference>
<dbReference type="SUPFAM" id="SSF51905">
    <property type="entry name" value="FAD/NAD(P)-binding domain"/>
    <property type="match status" value="1"/>
</dbReference>
<dbReference type="PROSITE" id="PS00623">
    <property type="entry name" value="GMC_OXRED_1"/>
    <property type="match status" value="1"/>
</dbReference>
<dbReference type="PROSITE" id="PS00624">
    <property type="entry name" value="GMC_OXRED_2"/>
    <property type="match status" value="1"/>
</dbReference>
<gene>
    <name type="ordered locus">MT1316</name>
</gene>
<feature type="chain" id="PRO_0000427236" description="Uncharacterized GMC-type oxidoreductase MT1316">
    <location>
        <begin position="1"/>
        <end position="528"/>
    </location>
</feature>
<feature type="active site" description="Proton acceptor" evidence="2">
    <location>
        <position position="468"/>
    </location>
</feature>
<feature type="binding site" evidence="3">
    <location>
        <begin position="6"/>
        <end position="35"/>
    </location>
    <ligand>
        <name>FAD</name>
        <dbReference type="ChEBI" id="CHEBI:57692"/>
    </ligand>
</feature>
<organism>
    <name type="scientific">Mycobacterium tuberculosis (strain CDC 1551 / Oshkosh)</name>
    <dbReference type="NCBI Taxonomy" id="83331"/>
    <lineage>
        <taxon>Bacteria</taxon>
        <taxon>Bacillati</taxon>
        <taxon>Actinomycetota</taxon>
        <taxon>Actinomycetes</taxon>
        <taxon>Mycobacteriales</taxon>
        <taxon>Mycobacteriaceae</taxon>
        <taxon>Mycobacterium</taxon>
        <taxon>Mycobacterium tuberculosis complex</taxon>
    </lineage>
</organism>
<keyword id="KW-0274">FAD</keyword>
<keyword id="KW-0285">Flavoprotein</keyword>
<keyword id="KW-0560">Oxidoreductase</keyword>
<keyword id="KW-1185">Reference proteome</keyword>
<protein>
    <recommendedName>
        <fullName>Uncharacterized GMC-type oxidoreductase MT1316</fullName>
        <ecNumber>1.1.-.-</ecNumber>
    </recommendedName>
</protein>
<name>Y1279_MYCTO</name>
<reference key="1">
    <citation type="journal article" date="2002" name="J. Bacteriol.">
        <title>Whole-genome comparison of Mycobacterium tuberculosis clinical and laboratory strains.</title>
        <authorList>
            <person name="Fleischmann R.D."/>
            <person name="Alland D."/>
            <person name="Eisen J.A."/>
            <person name="Carpenter L."/>
            <person name="White O."/>
            <person name="Peterson J.D."/>
            <person name="DeBoy R.T."/>
            <person name="Dodson R.J."/>
            <person name="Gwinn M.L."/>
            <person name="Haft D.H."/>
            <person name="Hickey E.K."/>
            <person name="Kolonay J.F."/>
            <person name="Nelson W.C."/>
            <person name="Umayam L.A."/>
            <person name="Ermolaeva M.D."/>
            <person name="Salzberg S.L."/>
            <person name="Delcher A."/>
            <person name="Utterback T.R."/>
            <person name="Weidman J.F."/>
            <person name="Khouri H.M."/>
            <person name="Gill J."/>
            <person name="Mikula A."/>
            <person name="Bishai W."/>
            <person name="Jacobs W.R. Jr."/>
            <person name="Venter J.C."/>
            <person name="Fraser C.M."/>
        </authorList>
    </citation>
    <scope>NUCLEOTIDE SEQUENCE [LARGE SCALE GENOMIC DNA]</scope>
    <source>
        <strain>CDC 1551 / Oshkosh</strain>
    </source>
</reference>
<accession>P9WMV4</accession>
<accession>L0T7T5</accession>
<accession>P64263</accession>
<accession>Q11038</accession>
<proteinExistence type="inferred from homology"/>
<comment type="cofactor">
    <cofactor evidence="1">
        <name>FAD</name>
        <dbReference type="ChEBI" id="CHEBI:57692"/>
    </cofactor>
</comment>
<comment type="similarity">
    <text evidence="4">Belongs to the GMC oxidoreductase family.</text>
</comment>